<gene>
    <name evidence="1" type="primary">ispF</name>
    <name type="ordered locus">SEN2768</name>
</gene>
<keyword id="KW-0414">Isoprene biosynthesis</keyword>
<keyword id="KW-0456">Lyase</keyword>
<keyword id="KW-0479">Metal-binding</keyword>
<name>ISPF_SALEP</name>
<dbReference type="EC" id="4.6.1.12" evidence="1"/>
<dbReference type="EMBL" id="AM933172">
    <property type="protein sequence ID" value="CAR34347.1"/>
    <property type="molecule type" value="Genomic_DNA"/>
</dbReference>
<dbReference type="RefSeq" id="WP_001219253.1">
    <property type="nucleotide sequence ID" value="NC_011294.1"/>
</dbReference>
<dbReference type="SMR" id="B5QW17"/>
<dbReference type="KEGG" id="set:SEN2768"/>
<dbReference type="HOGENOM" id="CLU_084630_2_0_6"/>
<dbReference type="UniPathway" id="UPA00056">
    <property type="reaction ID" value="UER00095"/>
</dbReference>
<dbReference type="Proteomes" id="UP000000613">
    <property type="component" value="Chromosome"/>
</dbReference>
<dbReference type="GO" id="GO:0008685">
    <property type="term" value="F:2-C-methyl-D-erythritol 2,4-cyclodiphosphate synthase activity"/>
    <property type="evidence" value="ECO:0007669"/>
    <property type="project" value="UniProtKB-UniRule"/>
</dbReference>
<dbReference type="GO" id="GO:0046872">
    <property type="term" value="F:metal ion binding"/>
    <property type="evidence" value="ECO:0007669"/>
    <property type="project" value="UniProtKB-KW"/>
</dbReference>
<dbReference type="GO" id="GO:0019288">
    <property type="term" value="P:isopentenyl diphosphate biosynthetic process, methylerythritol 4-phosphate pathway"/>
    <property type="evidence" value="ECO:0007669"/>
    <property type="project" value="UniProtKB-UniRule"/>
</dbReference>
<dbReference type="GO" id="GO:0016114">
    <property type="term" value="P:terpenoid biosynthetic process"/>
    <property type="evidence" value="ECO:0007669"/>
    <property type="project" value="InterPro"/>
</dbReference>
<dbReference type="CDD" id="cd00554">
    <property type="entry name" value="MECDP_synthase"/>
    <property type="match status" value="1"/>
</dbReference>
<dbReference type="FunFam" id="3.30.1330.50:FF:000001">
    <property type="entry name" value="2-C-methyl-D-erythritol 2,4-cyclodiphosphate synthase"/>
    <property type="match status" value="1"/>
</dbReference>
<dbReference type="Gene3D" id="3.30.1330.50">
    <property type="entry name" value="2-C-methyl-D-erythritol 2,4-cyclodiphosphate synthase"/>
    <property type="match status" value="1"/>
</dbReference>
<dbReference type="HAMAP" id="MF_00107">
    <property type="entry name" value="IspF"/>
    <property type="match status" value="1"/>
</dbReference>
<dbReference type="InterPro" id="IPR003526">
    <property type="entry name" value="MECDP_synthase"/>
</dbReference>
<dbReference type="InterPro" id="IPR020555">
    <property type="entry name" value="MECDP_synthase_CS"/>
</dbReference>
<dbReference type="InterPro" id="IPR036571">
    <property type="entry name" value="MECDP_synthase_sf"/>
</dbReference>
<dbReference type="NCBIfam" id="TIGR00151">
    <property type="entry name" value="ispF"/>
    <property type="match status" value="1"/>
</dbReference>
<dbReference type="PANTHER" id="PTHR43181">
    <property type="entry name" value="2-C-METHYL-D-ERYTHRITOL 2,4-CYCLODIPHOSPHATE SYNTHASE, CHLOROPLASTIC"/>
    <property type="match status" value="1"/>
</dbReference>
<dbReference type="PANTHER" id="PTHR43181:SF1">
    <property type="entry name" value="2-C-METHYL-D-ERYTHRITOL 2,4-CYCLODIPHOSPHATE SYNTHASE, CHLOROPLASTIC"/>
    <property type="match status" value="1"/>
</dbReference>
<dbReference type="Pfam" id="PF02542">
    <property type="entry name" value="YgbB"/>
    <property type="match status" value="1"/>
</dbReference>
<dbReference type="SUPFAM" id="SSF69765">
    <property type="entry name" value="IpsF-like"/>
    <property type="match status" value="1"/>
</dbReference>
<dbReference type="PROSITE" id="PS01350">
    <property type="entry name" value="ISPF"/>
    <property type="match status" value="1"/>
</dbReference>
<comment type="function">
    <text evidence="1">Involved in the biosynthesis of isopentenyl diphosphate (IPP) and dimethylallyl diphosphate (DMAPP), two major building blocks of isoprenoid compounds. Catalyzes the conversion of 4-diphosphocytidyl-2-C-methyl-D-erythritol 2-phosphate (CDP-ME2P) to 2-C-methyl-D-erythritol 2,4-cyclodiphosphate (ME-CPP) with a corresponding release of cytidine 5-monophosphate (CMP).</text>
</comment>
<comment type="catalytic activity">
    <reaction evidence="1">
        <text>4-CDP-2-C-methyl-D-erythritol 2-phosphate = 2-C-methyl-D-erythritol 2,4-cyclic diphosphate + CMP</text>
        <dbReference type="Rhea" id="RHEA:23864"/>
        <dbReference type="ChEBI" id="CHEBI:57919"/>
        <dbReference type="ChEBI" id="CHEBI:58483"/>
        <dbReference type="ChEBI" id="CHEBI:60377"/>
        <dbReference type="EC" id="4.6.1.12"/>
    </reaction>
</comment>
<comment type="cofactor">
    <cofactor evidence="1">
        <name>a divalent metal cation</name>
        <dbReference type="ChEBI" id="CHEBI:60240"/>
    </cofactor>
    <text evidence="1">Binds 1 divalent metal cation per subunit.</text>
</comment>
<comment type="pathway">
    <text evidence="1">Isoprenoid biosynthesis; isopentenyl diphosphate biosynthesis via DXP pathway; isopentenyl diphosphate from 1-deoxy-D-xylulose 5-phosphate: step 4/6.</text>
</comment>
<comment type="subunit">
    <text evidence="1">Homotrimer.</text>
</comment>
<comment type="similarity">
    <text evidence="1">Belongs to the IspF family.</text>
</comment>
<evidence type="ECO:0000255" key="1">
    <source>
        <dbReference type="HAMAP-Rule" id="MF_00107"/>
    </source>
</evidence>
<reference key="1">
    <citation type="journal article" date="2008" name="Genome Res.">
        <title>Comparative genome analysis of Salmonella enteritidis PT4 and Salmonella gallinarum 287/91 provides insights into evolutionary and host adaptation pathways.</title>
        <authorList>
            <person name="Thomson N.R."/>
            <person name="Clayton D.J."/>
            <person name="Windhorst D."/>
            <person name="Vernikos G."/>
            <person name="Davidson S."/>
            <person name="Churcher C."/>
            <person name="Quail M.A."/>
            <person name="Stevens M."/>
            <person name="Jones M.A."/>
            <person name="Watson M."/>
            <person name="Barron A."/>
            <person name="Layton A."/>
            <person name="Pickard D."/>
            <person name="Kingsley R.A."/>
            <person name="Bignell A."/>
            <person name="Clark L."/>
            <person name="Harris B."/>
            <person name="Ormond D."/>
            <person name="Abdellah Z."/>
            <person name="Brooks K."/>
            <person name="Cherevach I."/>
            <person name="Chillingworth T."/>
            <person name="Woodward J."/>
            <person name="Norberczak H."/>
            <person name="Lord A."/>
            <person name="Arrowsmith C."/>
            <person name="Jagels K."/>
            <person name="Moule S."/>
            <person name="Mungall K."/>
            <person name="Saunders M."/>
            <person name="Whitehead S."/>
            <person name="Chabalgoity J.A."/>
            <person name="Maskell D."/>
            <person name="Humphreys T."/>
            <person name="Roberts M."/>
            <person name="Barrow P.A."/>
            <person name="Dougan G."/>
            <person name="Parkhill J."/>
        </authorList>
    </citation>
    <scope>NUCLEOTIDE SEQUENCE [LARGE SCALE GENOMIC DNA]</scope>
    <source>
        <strain>P125109</strain>
    </source>
</reference>
<feature type="chain" id="PRO_1000094285" description="2-C-methyl-D-erythritol 2,4-cyclodiphosphate synthase">
    <location>
        <begin position="1"/>
        <end position="159"/>
    </location>
</feature>
<feature type="binding site" evidence="1">
    <location>
        <begin position="8"/>
        <end position="10"/>
    </location>
    <ligand>
        <name>4-CDP-2-C-methyl-D-erythritol 2-phosphate</name>
        <dbReference type="ChEBI" id="CHEBI:57919"/>
    </ligand>
</feature>
<feature type="binding site" evidence="1">
    <location>
        <position position="8"/>
    </location>
    <ligand>
        <name>a divalent metal cation</name>
        <dbReference type="ChEBI" id="CHEBI:60240"/>
    </ligand>
</feature>
<feature type="binding site" evidence="1">
    <location>
        <position position="10"/>
    </location>
    <ligand>
        <name>a divalent metal cation</name>
        <dbReference type="ChEBI" id="CHEBI:60240"/>
    </ligand>
</feature>
<feature type="binding site" evidence="1">
    <location>
        <begin position="34"/>
        <end position="35"/>
    </location>
    <ligand>
        <name>4-CDP-2-C-methyl-D-erythritol 2-phosphate</name>
        <dbReference type="ChEBI" id="CHEBI:57919"/>
    </ligand>
</feature>
<feature type="binding site" evidence="1">
    <location>
        <position position="42"/>
    </location>
    <ligand>
        <name>a divalent metal cation</name>
        <dbReference type="ChEBI" id="CHEBI:60240"/>
    </ligand>
</feature>
<feature type="binding site" evidence="1">
    <location>
        <begin position="56"/>
        <end position="58"/>
    </location>
    <ligand>
        <name>4-CDP-2-C-methyl-D-erythritol 2-phosphate</name>
        <dbReference type="ChEBI" id="CHEBI:57919"/>
    </ligand>
</feature>
<feature type="binding site" evidence="1">
    <location>
        <begin position="61"/>
        <end position="65"/>
    </location>
    <ligand>
        <name>4-CDP-2-C-methyl-D-erythritol 2-phosphate</name>
        <dbReference type="ChEBI" id="CHEBI:57919"/>
    </ligand>
</feature>
<feature type="binding site" evidence="1">
    <location>
        <begin position="100"/>
        <end position="106"/>
    </location>
    <ligand>
        <name>4-CDP-2-C-methyl-D-erythritol 2-phosphate</name>
        <dbReference type="ChEBI" id="CHEBI:57919"/>
    </ligand>
</feature>
<feature type="binding site" evidence="1">
    <location>
        <begin position="132"/>
        <end position="135"/>
    </location>
    <ligand>
        <name>4-CDP-2-C-methyl-D-erythritol 2-phosphate</name>
        <dbReference type="ChEBI" id="CHEBI:57919"/>
    </ligand>
</feature>
<feature type="binding site" evidence="1">
    <location>
        <position position="139"/>
    </location>
    <ligand>
        <name>4-CDP-2-C-methyl-D-erythritol 2-phosphate</name>
        <dbReference type="ChEBI" id="CHEBI:57919"/>
    </ligand>
</feature>
<feature type="binding site" evidence="1">
    <location>
        <position position="142"/>
    </location>
    <ligand>
        <name>4-CDP-2-C-methyl-D-erythritol 2-phosphate</name>
        <dbReference type="ChEBI" id="CHEBI:57919"/>
    </ligand>
</feature>
<feature type="site" description="Transition state stabilizer" evidence="1">
    <location>
        <position position="34"/>
    </location>
</feature>
<feature type="site" description="Transition state stabilizer" evidence="1">
    <location>
        <position position="133"/>
    </location>
</feature>
<protein>
    <recommendedName>
        <fullName evidence="1">2-C-methyl-D-erythritol 2,4-cyclodiphosphate synthase</fullName>
        <shortName evidence="1">MECDP-synthase</shortName>
        <shortName evidence="1">MECPP-synthase</shortName>
        <shortName evidence="1">MECPS</shortName>
        <ecNumber evidence="1">4.6.1.12</ecNumber>
    </recommendedName>
</protein>
<organism>
    <name type="scientific">Salmonella enteritidis PT4 (strain P125109)</name>
    <dbReference type="NCBI Taxonomy" id="550537"/>
    <lineage>
        <taxon>Bacteria</taxon>
        <taxon>Pseudomonadati</taxon>
        <taxon>Pseudomonadota</taxon>
        <taxon>Gammaproteobacteria</taxon>
        <taxon>Enterobacterales</taxon>
        <taxon>Enterobacteriaceae</taxon>
        <taxon>Salmonella</taxon>
    </lineage>
</organism>
<sequence>MRIGHGFDVHAFGGEGPIIIGGVRISYEKGLLAHSDGDVALHALTDALLGAAALGDIGKLFPDTDPAFKGADSRELLREAWRRIQAKGYTLGNVDVTIIAQAPKMLPHIPQMRVFIAEDLGCHMDDVNVKATTTEKLGFTGRGEGIACEAVALLMKAAK</sequence>
<accession>B5QW17</accession>
<proteinExistence type="inferred from homology"/>